<feature type="chain" id="PRO_1000123923" description="Probable protein kinase UbiB">
    <location>
        <begin position="1"/>
        <end position="546"/>
    </location>
</feature>
<feature type="transmembrane region" description="Helical" evidence="1">
    <location>
        <begin position="501"/>
        <end position="521"/>
    </location>
</feature>
<feature type="transmembrane region" description="Helical" evidence="1">
    <location>
        <begin position="522"/>
        <end position="542"/>
    </location>
</feature>
<feature type="domain" description="Protein kinase" evidence="1">
    <location>
        <begin position="124"/>
        <end position="502"/>
    </location>
</feature>
<feature type="active site" description="Proton acceptor" evidence="1">
    <location>
        <position position="288"/>
    </location>
</feature>
<feature type="binding site" evidence="1">
    <location>
        <begin position="130"/>
        <end position="138"/>
    </location>
    <ligand>
        <name>ATP</name>
        <dbReference type="ChEBI" id="CHEBI:30616"/>
    </ligand>
</feature>
<feature type="binding site" evidence="1">
    <location>
        <position position="153"/>
    </location>
    <ligand>
        <name>ATP</name>
        <dbReference type="ChEBI" id="CHEBI:30616"/>
    </ligand>
</feature>
<proteinExistence type="inferred from homology"/>
<evidence type="ECO:0000255" key="1">
    <source>
        <dbReference type="HAMAP-Rule" id="MF_00414"/>
    </source>
</evidence>
<gene>
    <name evidence="1" type="primary">ubiB</name>
    <name type="ordered locus">SeSA_A4180</name>
</gene>
<dbReference type="EC" id="2.7.-.-" evidence="1"/>
<dbReference type="EMBL" id="CP001127">
    <property type="protein sequence ID" value="ACF89560.1"/>
    <property type="molecule type" value="Genomic_DNA"/>
</dbReference>
<dbReference type="RefSeq" id="WP_000187559.1">
    <property type="nucleotide sequence ID" value="NC_011094.1"/>
</dbReference>
<dbReference type="SMR" id="B4TNY1"/>
<dbReference type="KEGG" id="sew:SeSA_A4180"/>
<dbReference type="HOGENOM" id="CLU_006533_0_0_6"/>
<dbReference type="UniPathway" id="UPA00232"/>
<dbReference type="Proteomes" id="UP000001865">
    <property type="component" value="Chromosome"/>
</dbReference>
<dbReference type="GO" id="GO:0005886">
    <property type="term" value="C:plasma membrane"/>
    <property type="evidence" value="ECO:0007669"/>
    <property type="project" value="UniProtKB-SubCell"/>
</dbReference>
<dbReference type="GO" id="GO:0005524">
    <property type="term" value="F:ATP binding"/>
    <property type="evidence" value="ECO:0007669"/>
    <property type="project" value="UniProtKB-KW"/>
</dbReference>
<dbReference type="GO" id="GO:0004672">
    <property type="term" value="F:protein kinase activity"/>
    <property type="evidence" value="ECO:0007669"/>
    <property type="project" value="UniProtKB-UniRule"/>
</dbReference>
<dbReference type="GO" id="GO:0010795">
    <property type="term" value="P:regulation of ubiquinone biosynthetic process"/>
    <property type="evidence" value="ECO:0007669"/>
    <property type="project" value="UniProtKB-UniRule"/>
</dbReference>
<dbReference type="GO" id="GO:0006744">
    <property type="term" value="P:ubiquinone biosynthetic process"/>
    <property type="evidence" value="ECO:0007669"/>
    <property type="project" value="UniProtKB-UniPathway"/>
</dbReference>
<dbReference type="CDD" id="cd13972">
    <property type="entry name" value="UbiB"/>
    <property type="match status" value="1"/>
</dbReference>
<dbReference type="HAMAP" id="MF_00414">
    <property type="entry name" value="UbiB"/>
    <property type="match status" value="1"/>
</dbReference>
<dbReference type="InterPro" id="IPR004147">
    <property type="entry name" value="ABC1_dom"/>
</dbReference>
<dbReference type="InterPro" id="IPR011009">
    <property type="entry name" value="Kinase-like_dom_sf"/>
</dbReference>
<dbReference type="InterPro" id="IPR010232">
    <property type="entry name" value="UbiB"/>
</dbReference>
<dbReference type="InterPro" id="IPR045308">
    <property type="entry name" value="UbiB_bact"/>
</dbReference>
<dbReference type="InterPro" id="IPR050154">
    <property type="entry name" value="UbiB_kinase"/>
</dbReference>
<dbReference type="NCBIfam" id="NF003404">
    <property type="entry name" value="PRK04750.1"/>
    <property type="match status" value="1"/>
</dbReference>
<dbReference type="NCBIfam" id="TIGR01982">
    <property type="entry name" value="UbiB"/>
    <property type="match status" value="1"/>
</dbReference>
<dbReference type="PANTHER" id="PTHR10566">
    <property type="entry name" value="CHAPERONE-ACTIVITY OF BC1 COMPLEX CABC1 -RELATED"/>
    <property type="match status" value="1"/>
</dbReference>
<dbReference type="PANTHER" id="PTHR10566:SF113">
    <property type="entry name" value="PROTEIN ACTIVITY OF BC1 COMPLEX KINASE 7, CHLOROPLASTIC"/>
    <property type="match status" value="1"/>
</dbReference>
<dbReference type="Pfam" id="PF03109">
    <property type="entry name" value="ABC1"/>
    <property type="match status" value="1"/>
</dbReference>
<dbReference type="SUPFAM" id="SSF56112">
    <property type="entry name" value="Protein kinase-like (PK-like)"/>
    <property type="match status" value="1"/>
</dbReference>
<name>UBIB_SALSV</name>
<protein>
    <recommendedName>
        <fullName evidence="1">Probable protein kinase UbiB</fullName>
        <ecNumber evidence="1">2.7.-.-</ecNumber>
    </recommendedName>
    <alternativeName>
        <fullName evidence="1">Ubiquinone biosynthesis protein UbiB</fullName>
    </alternativeName>
</protein>
<organism>
    <name type="scientific">Salmonella schwarzengrund (strain CVM19633)</name>
    <dbReference type="NCBI Taxonomy" id="439843"/>
    <lineage>
        <taxon>Bacteria</taxon>
        <taxon>Pseudomonadati</taxon>
        <taxon>Pseudomonadota</taxon>
        <taxon>Gammaproteobacteria</taxon>
        <taxon>Enterobacterales</taxon>
        <taxon>Enterobacteriaceae</taxon>
        <taxon>Salmonella</taxon>
    </lineage>
</organism>
<comment type="function">
    <text evidence="1">Is probably a protein kinase regulator of UbiI activity which is involved in aerobic coenzyme Q (ubiquinone) biosynthesis.</text>
</comment>
<comment type="pathway">
    <text>Cofactor biosynthesis; ubiquinone biosynthesis [regulation].</text>
</comment>
<comment type="subcellular location">
    <subcellularLocation>
        <location evidence="1">Cell inner membrane</location>
        <topology evidence="1">Multi-pass membrane protein</topology>
    </subcellularLocation>
</comment>
<comment type="similarity">
    <text evidence="1">Belongs to the ABC1 family. UbiB subfamily.</text>
</comment>
<accession>B4TNY1</accession>
<reference key="1">
    <citation type="journal article" date="2011" name="J. Bacteriol.">
        <title>Comparative genomics of 28 Salmonella enterica isolates: evidence for CRISPR-mediated adaptive sublineage evolution.</title>
        <authorList>
            <person name="Fricke W.F."/>
            <person name="Mammel M.K."/>
            <person name="McDermott P.F."/>
            <person name="Tartera C."/>
            <person name="White D.G."/>
            <person name="Leclerc J.E."/>
            <person name="Ravel J."/>
            <person name="Cebula T.A."/>
        </authorList>
    </citation>
    <scope>NUCLEOTIDE SEQUENCE [LARGE SCALE GENOMIC DNA]</scope>
    <source>
        <strain>CVM19633</strain>
    </source>
</reference>
<sequence>MTPGEVRRLYFIIRTFLSYGLDELIPRMRLTLPLRLWRYSLFWMPNRHKDKLLGERLRLALQELGPVWIKFGQMLSTRRDLFPPQIADQLALLQDKVAPFDGRLAKAQIEEAMGGLPVEAWFDDFDIQPLASASIAQVHTARLKSNGKEVVIKVIRPDILPVIQADLKLIYRLARWVPRLLPDGRRLRPTEVVREYEKTLIDELNLLRESANAIQLRRNFENSPMLYIPEVYSDYCSQNMMVMERIYGIPVSDVAALEKNGTNMKLLAERGVKVFFTQVFRDSFFHADMHPGNIFVSHEHPENPQYIGIDCGIVGSLNKEDKRYLAENFIAFFNRDYRKVAELHVDSGWVPPDTNVEDFEFAIRTVCEPIFEKPLAEISFGHVLLNLFNTARRFNMEVQPQLVLLQKTLLYVEGVGRQLYPQLDLWKTAKPFLESWIKDQVGIPALTRALKEKAPFWVEKMPEIPELVYDSLRQGKYLQHSVDKIARELQVNHVRQSQSRYLLGIGATLLLSGSFLLVNRPEWGLMPGWLMVGGVVVWLVGWRKTR</sequence>
<keyword id="KW-0067">ATP-binding</keyword>
<keyword id="KW-0997">Cell inner membrane</keyword>
<keyword id="KW-1003">Cell membrane</keyword>
<keyword id="KW-0418">Kinase</keyword>
<keyword id="KW-0472">Membrane</keyword>
<keyword id="KW-0547">Nucleotide-binding</keyword>
<keyword id="KW-0808">Transferase</keyword>
<keyword id="KW-0812">Transmembrane</keyword>
<keyword id="KW-1133">Transmembrane helix</keyword>
<keyword id="KW-0831">Ubiquinone biosynthesis</keyword>